<organism>
    <name type="scientific">Caenorhabditis elegans</name>
    <dbReference type="NCBI Taxonomy" id="6239"/>
    <lineage>
        <taxon>Eukaryota</taxon>
        <taxon>Metazoa</taxon>
        <taxon>Ecdysozoa</taxon>
        <taxon>Nematoda</taxon>
        <taxon>Chromadorea</taxon>
        <taxon>Rhabditida</taxon>
        <taxon>Rhabditina</taxon>
        <taxon>Rhabditomorpha</taxon>
        <taxon>Rhabditoidea</taxon>
        <taxon>Rhabditidae</taxon>
        <taxon>Peloderinae</taxon>
        <taxon>Caenorhabditis</taxon>
    </lineage>
</organism>
<feature type="chain" id="PRO_0000180469" description="Ribonuclease 3">
    <location>
        <begin position="1"/>
        <end position="1086"/>
    </location>
</feature>
<feature type="domain" description="RNase III 1">
    <location>
        <begin position="607"/>
        <end position="781"/>
    </location>
</feature>
<feature type="domain" description="RNase III 2">
    <location>
        <begin position="833"/>
        <end position="957"/>
    </location>
</feature>
<feature type="domain" description="DRBM">
    <location>
        <begin position="984"/>
        <end position="1059"/>
    </location>
</feature>
<feature type="region of interest" description="Disordered" evidence="4">
    <location>
        <begin position="1"/>
        <end position="77"/>
    </location>
</feature>
<feature type="region of interest" description="Disordered" evidence="4">
    <location>
        <begin position="158"/>
        <end position="233"/>
    </location>
</feature>
<feature type="compositionally biased region" description="Basic residues" evidence="4">
    <location>
        <begin position="13"/>
        <end position="23"/>
    </location>
</feature>
<feature type="compositionally biased region" description="Basic and acidic residues" evidence="4">
    <location>
        <begin position="24"/>
        <end position="35"/>
    </location>
</feature>
<feature type="compositionally biased region" description="Polar residues" evidence="4">
    <location>
        <begin position="43"/>
        <end position="53"/>
    </location>
</feature>
<feature type="compositionally biased region" description="Basic residues" evidence="4">
    <location>
        <begin position="159"/>
        <end position="168"/>
    </location>
</feature>
<feature type="compositionally biased region" description="Acidic residues" evidence="4">
    <location>
        <begin position="181"/>
        <end position="190"/>
    </location>
</feature>
<feature type="compositionally biased region" description="Polar residues" evidence="4">
    <location>
        <begin position="191"/>
        <end position="201"/>
    </location>
</feature>
<feature type="compositionally biased region" description="Basic and acidic residues" evidence="4">
    <location>
        <begin position="203"/>
        <end position="217"/>
    </location>
</feature>
<feature type="binding site" evidence="2">
    <location>
        <position position="694"/>
    </location>
    <ligand>
        <name>Mg(2+)</name>
        <dbReference type="ChEBI" id="CHEBI:18420"/>
        <label>1</label>
    </ligand>
</feature>
<feature type="binding site" evidence="2">
    <location>
        <position position="767"/>
    </location>
    <ligand>
        <name>Mg(2+)</name>
        <dbReference type="ChEBI" id="CHEBI:18420"/>
        <label>1</label>
    </ligand>
</feature>
<feature type="binding site" evidence="2">
    <location>
        <position position="770"/>
    </location>
    <ligand>
        <name>Mg(2+)</name>
        <dbReference type="ChEBI" id="CHEBI:18420"/>
        <label>1</label>
    </ligand>
</feature>
<feature type="binding site" evidence="2">
    <location>
        <position position="873"/>
    </location>
    <ligand>
        <name>Mg(2+)</name>
        <dbReference type="ChEBI" id="CHEBI:18420"/>
        <label>2</label>
    </ligand>
</feature>
<feature type="binding site" evidence="2">
    <location>
        <position position="943"/>
    </location>
    <ligand>
        <name>Mg(2+)</name>
        <dbReference type="ChEBI" id="CHEBI:18420"/>
        <label>2</label>
    </ligand>
</feature>
<feature type="binding site" evidence="2">
    <location>
        <position position="946"/>
    </location>
    <ligand>
        <name>Mg(2+)</name>
        <dbReference type="ChEBI" id="CHEBI:18420"/>
        <label>2</label>
    </ligand>
</feature>
<feature type="site" description="Important for activity" evidence="1">
    <location>
        <position position="939"/>
    </location>
</feature>
<feature type="splice variant" id="VSP_043603" description="In isoform b." evidence="6">
    <location>
        <begin position="668"/>
        <end position="669"/>
    </location>
</feature>
<feature type="splice variant" id="VSP_034688" description="In isoform b." evidence="6">
    <location>
        <begin position="1072"/>
        <end position="1074"/>
    </location>
</feature>
<keyword id="KW-0025">Alternative splicing</keyword>
<keyword id="KW-0217">Developmental protein</keyword>
<keyword id="KW-0221">Differentiation</keyword>
<keyword id="KW-0255">Endonuclease</keyword>
<keyword id="KW-0334">Gonadal differentiation</keyword>
<keyword id="KW-0378">Hydrolase</keyword>
<keyword id="KW-0460">Magnesium</keyword>
<keyword id="KW-0464">Manganese</keyword>
<keyword id="KW-0479">Metal-binding</keyword>
<keyword id="KW-0540">Nuclease</keyword>
<keyword id="KW-0539">Nucleus</keyword>
<keyword id="KW-1185">Reference proteome</keyword>
<keyword id="KW-0677">Repeat</keyword>
<keyword id="KW-0690">Ribosome biogenesis</keyword>
<keyword id="KW-0694">RNA-binding</keyword>
<keyword id="KW-0698">rRNA processing</keyword>
<evidence type="ECO:0000250" key="1"/>
<evidence type="ECO:0000250" key="2">
    <source>
        <dbReference type="UniProtKB" id="O67082"/>
    </source>
</evidence>
<evidence type="ECO:0000250" key="3">
    <source>
        <dbReference type="UniProtKB" id="Q9NRR4"/>
    </source>
</evidence>
<evidence type="ECO:0000256" key="4">
    <source>
        <dbReference type="SAM" id="MobiDB-lite"/>
    </source>
</evidence>
<evidence type="ECO:0000269" key="5">
    <source>
    </source>
</evidence>
<evidence type="ECO:0000305" key="6"/>
<dbReference type="EC" id="3.1.26.3"/>
<dbReference type="EMBL" id="AF160248">
    <property type="protein sequence ID" value="AAD45518.1"/>
    <property type="molecule type" value="mRNA"/>
</dbReference>
<dbReference type="EMBL" id="Z81070">
    <property type="protein sequence ID" value="CAB03006.3"/>
    <property type="molecule type" value="Genomic_DNA"/>
</dbReference>
<dbReference type="EMBL" id="Z81070">
    <property type="protein sequence ID" value="CAP19331.2"/>
    <property type="molecule type" value="Genomic_DNA"/>
</dbReference>
<dbReference type="PIR" id="T21420">
    <property type="entry name" value="T21420"/>
</dbReference>
<dbReference type="RefSeq" id="NP_001122460.2">
    <molecule id="O01326-2"/>
    <property type="nucleotide sequence ID" value="NM_001128988.5"/>
</dbReference>
<dbReference type="RefSeq" id="NP_492599.1">
    <molecule id="O01326-1"/>
    <property type="nucleotide sequence ID" value="NM_060198.5"/>
</dbReference>
<dbReference type="SMR" id="O01326"/>
<dbReference type="BioGRID" id="38253">
    <property type="interactions" value="5"/>
</dbReference>
<dbReference type="FunCoup" id="O01326">
    <property type="interactions" value="2991"/>
</dbReference>
<dbReference type="STRING" id="6239.F26E4.10a.1"/>
<dbReference type="PaxDb" id="6239-F26E4.10a"/>
<dbReference type="PeptideAtlas" id="O01326"/>
<dbReference type="EnsemblMetazoa" id="F26E4.10a.1">
    <molecule id="O01326-1"/>
    <property type="protein sequence ID" value="F26E4.10a.1"/>
    <property type="gene ID" value="WBGene00009163"/>
</dbReference>
<dbReference type="EnsemblMetazoa" id="F26E4.10b.1">
    <molecule id="O01326-2"/>
    <property type="protein sequence ID" value="F26E4.10b.1"/>
    <property type="gene ID" value="WBGene00009163"/>
</dbReference>
<dbReference type="GeneID" id="172830"/>
<dbReference type="KEGG" id="cel:CELE_F26E4.10"/>
<dbReference type="UCSC" id="F26E4.10a">
    <property type="organism name" value="c. elegans"/>
</dbReference>
<dbReference type="AGR" id="WB:WBGene00009163"/>
<dbReference type="CTD" id="172830"/>
<dbReference type="WormBase" id="F26E4.10a">
    <molecule id="O01326-1"/>
    <property type="protein sequence ID" value="CE29039"/>
    <property type="gene ID" value="WBGene00009163"/>
    <property type="gene designation" value="drsh-1"/>
</dbReference>
<dbReference type="WormBase" id="F26E4.10b">
    <molecule id="O01326-2"/>
    <property type="protein sequence ID" value="CE46611"/>
    <property type="gene ID" value="WBGene00009163"/>
    <property type="gene designation" value="drsh-1"/>
</dbReference>
<dbReference type="eggNOG" id="KOG1817">
    <property type="taxonomic scope" value="Eukaryota"/>
</dbReference>
<dbReference type="GeneTree" id="ENSGT00730000111052"/>
<dbReference type="InParanoid" id="O01326"/>
<dbReference type="OMA" id="SPLNHNE"/>
<dbReference type="OrthoDB" id="67027at2759"/>
<dbReference type="PhylomeDB" id="O01326"/>
<dbReference type="PRO" id="PR:O01326"/>
<dbReference type="Proteomes" id="UP000001940">
    <property type="component" value="Chromosome I"/>
</dbReference>
<dbReference type="Bgee" id="WBGene00009163">
    <property type="expression patterns" value="Expressed in germ line (C elegans) and 4 other cell types or tissues"/>
</dbReference>
<dbReference type="GO" id="GO:0070877">
    <property type="term" value="C:microprocessor complex"/>
    <property type="evidence" value="ECO:0000250"/>
    <property type="project" value="WormBase"/>
</dbReference>
<dbReference type="GO" id="GO:0005634">
    <property type="term" value="C:nucleus"/>
    <property type="evidence" value="ECO:0000318"/>
    <property type="project" value="GO_Central"/>
</dbReference>
<dbReference type="GO" id="GO:0046872">
    <property type="term" value="F:metal ion binding"/>
    <property type="evidence" value="ECO:0007669"/>
    <property type="project" value="UniProtKB-KW"/>
</dbReference>
<dbReference type="GO" id="GO:0004525">
    <property type="term" value="F:ribonuclease III activity"/>
    <property type="evidence" value="ECO:0000315"/>
    <property type="project" value="UniProtKB"/>
</dbReference>
<dbReference type="GO" id="GO:0003723">
    <property type="term" value="F:RNA binding"/>
    <property type="evidence" value="ECO:0007669"/>
    <property type="project" value="UniProtKB-KW"/>
</dbReference>
<dbReference type="GO" id="GO:0030154">
    <property type="term" value="P:cell differentiation"/>
    <property type="evidence" value="ECO:0007669"/>
    <property type="project" value="UniProtKB-KW"/>
</dbReference>
<dbReference type="GO" id="GO:0007506">
    <property type="term" value="P:gonadal mesoderm development"/>
    <property type="evidence" value="ECO:0007669"/>
    <property type="project" value="UniProtKB-KW"/>
</dbReference>
<dbReference type="GO" id="GO:0031054">
    <property type="term" value="P:pre-miRNA processing"/>
    <property type="evidence" value="ECO:0000318"/>
    <property type="project" value="GO_Central"/>
</dbReference>
<dbReference type="GO" id="GO:0031053">
    <property type="term" value="P:primary miRNA processing"/>
    <property type="evidence" value="ECO:0000315"/>
    <property type="project" value="UniProtKB"/>
</dbReference>
<dbReference type="GO" id="GO:0006364">
    <property type="term" value="P:rRNA processing"/>
    <property type="evidence" value="ECO:0007669"/>
    <property type="project" value="UniProtKB-KW"/>
</dbReference>
<dbReference type="GO" id="GO:0019953">
    <property type="term" value="P:sexual reproduction"/>
    <property type="evidence" value="ECO:0000315"/>
    <property type="project" value="UniProtKB"/>
</dbReference>
<dbReference type="CDD" id="cd19877">
    <property type="entry name" value="DSRM_RNAse_III_meta_like"/>
    <property type="match status" value="1"/>
</dbReference>
<dbReference type="CDD" id="cd00593">
    <property type="entry name" value="RIBOc"/>
    <property type="match status" value="2"/>
</dbReference>
<dbReference type="FunFam" id="1.10.1520.10:FF:000002">
    <property type="entry name" value="Drosha ribonuclease III"/>
    <property type="match status" value="1"/>
</dbReference>
<dbReference type="FunFam" id="3.30.160.20:FF:000012">
    <property type="entry name" value="Drosha ribonuclease III"/>
    <property type="match status" value="1"/>
</dbReference>
<dbReference type="Gene3D" id="3.30.160.20">
    <property type="match status" value="1"/>
</dbReference>
<dbReference type="Gene3D" id="1.10.1520.10">
    <property type="entry name" value="Ribonuclease III domain"/>
    <property type="match status" value="2"/>
</dbReference>
<dbReference type="HAMAP" id="MF_00104">
    <property type="entry name" value="RNase_III"/>
    <property type="match status" value="1"/>
</dbReference>
<dbReference type="InterPro" id="IPR014720">
    <property type="entry name" value="dsRBD_dom"/>
</dbReference>
<dbReference type="InterPro" id="IPR011907">
    <property type="entry name" value="RNase_III"/>
</dbReference>
<dbReference type="InterPro" id="IPR000999">
    <property type="entry name" value="RNase_III_dom"/>
</dbReference>
<dbReference type="InterPro" id="IPR044442">
    <property type="entry name" value="RNAse_III_DSRM__animal"/>
</dbReference>
<dbReference type="InterPro" id="IPR036389">
    <property type="entry name" value="RNase_III_sf"/>
</dbReference>
<dbReference type="PANTHER" id="PTHR11207:SF0">
    <property type="entry name" value="RIBONUCLEASE 3"/>
    <property type="match status" value="1"/>
</dbReference>
<dbReference type="PANTHER" id="PTHR11207">
    <property type="entry name" value="RIBONUCLEASE III"/>
    <property type="match status" value="1"/>
</dbReference>
<dbReference type="Pfam" id="PF00035">
    <property type="entry name" value="dsrm"/>
    <property type="match status" value="1"/>
</dbReference>
<dbReference type="Pfam" id="PF14622">
    <property type="entry name" value="Ribonucleas_3_3"/>
    <property type="match status" value="1"/>
</dbReference>
<dbReference type="Pfam" id="PF00636">
    <property type="entry name" value="Ribonuclease_3"/>
    <property type="match status" value="1"/>
</dbReference>
<dbReference type="SMART" id="SM00358">
    <property type="entry name" value="DSRM"/>
    <property type="match status" value="1"/>
</dbReference>
<dbReference type="SMART" id="SM00535">
    <property type="entry name" value="RIBOc"/>
    <property type="match status" value="2"/>
</dbReference>
<dbReference type="SUPFAM" id="SSF54768">
    <property type="entry name" value="dsRNA-binding domain-like"/>
    <property type="match status" value="1"/>
</dbReference>
<dbReference type="SUPFAM" id="SSF69065">
    <property type="entry name" value="RNase III domain-like"/>
    <property type="match status" value="2"/>
</dbReference>
<dbReference type="PROSITE" id="PS50137">
    <property type="entry name" value="DS_RBD"/>
    <property type="match status" value="1"/>
</dbReference>
<dbReference type="PROSITE" id="PS00517">
    <property type="entry name" value="RNASE_3_1"/>
    <property type="match status" value="2"/>
</dbReference>
<dbReference type="PROSITE" id="PS50142">
    <property type="entry name" value="RNASE_3_2"/>
    <property type="match status" value="2"/>
</dbReference>
<comment type="function">
    <text evidence="5">Executes the initial step of microRNA (miRNA) processing in the nucleus, that is the cleavage of pri-miRNA to release pre-miRNA. Involved in pre-rRNA processing. Cleaves double-strand RNA and does not cleave single-strand RNA. Involved in fertility. Required for the function or synthesis of the let-7 miRNA.</text>
</comment>
<comment type="catalytic activity">
    <reaction>
        <text>Endonucleolytic cleavage to 5'-phosphomonoester.</text>
        <dbReference type="EC" id="3.1.26.3"/>
    </reaction>
</comment>
<comment type="cofactor">
    <cofactor evidence="3">
        <name>Mg(2+)</name>
        <dbReference type="ChEBI" id="CHEBI:18420"/>
    </cofactor>
    <cofactor evidence="3">
        <name>Mn(2+)</name>
        <dbReference type="ChEBI" id="CHEBI:29035"/>
    </cofactor>
    <text evidence="3">Each RNase III domain binds at least one Mg(2+) or Mn(2+) ion.</text>
</comment>
<comment type="subcellular location">
    <subcellularLocation>
        <location evidence="6">Nucleus</location>
    </subcellularLocation>
</comment>
<comment type="alternative products">
    <event type="alternative splicing"/>
    <isoform>
        <id>O01326-1</id>
        <name>a</name>
        <sequence type="displayed"/>
    </isoform>
    <isoform>
        <id>O01326-2</id>
        <name>b</name>
        <sequence type="described" ref="VSP_043603 VSP_034688"/>
    </isoform>
</comment>
<comment type="disruption phenotype">
    <text evidence="5">Sterility.</text>
</comment>
<comment type="similarity">
    <text evidence="6">Belongs to the ribonuclease III family.</text>
</comment>
<protein>
    <recommendedName>
        <fullName>Ribonuclease 3</fullName>
        <ecNumber>3.1.26.3</ecNumber>
    </recommendedName>
    <alternativeName>
        <fullName>Protein drosha</fullName>
    </alternativeName>
    <alternativeName>
        <fullName>Ribonuclease III</fullName>
        <shortName>RNase III</shortName>
    </alternativeName>
</protein>
<proteinExistence type="evidence at transcript level"/>
<sequence length="1086" mass="125334">MSDEKISMTLNFPKHKRARRKKYQKEYQERHKEEMMQQLGRRFQNQPSTSSAPPDTVEKIPLPTESTSALPFGDSPRLTEKDYETNYMIDPPVVSTHSAELIKSNRVVIKAEEAEKYMMIKAKSTTSKILQDFQTKILETVKTKRRLQADVPYIIHPCHSMKGRKTPKQKGGDESFTASDVSDDSNDSQDEASTSEPTNRQAPEADKTGEVKDEKQTCNRRNQQRKAKRLRNFEEKERQITLLKKGIDRKKTHPNGIHPDISFNEKGLGNEGPECRCPEPIKTCGLKHGYYAGEDKAIDCKKSNGENLHYYTLRVTPLPSENQLYRTHMAINGEEFEFEGFSLITHAPLPDCMTRAPICKYSMDYEFQLVEEFMPDECFDPEDCDMLFEYIFHEIFEMLDFELRPKHIPSDVESCPMIHIMPRFVQTKDDLVQLWSSKTVLAYFTSKGSSEIMSPEDVNRLCDAQIDQFTRNTSKHKQSIVLNTKFKPSAIRADWFERDEEKKEVYVVHNAIRAQTYTAISLPRIAFLEKTLNKMIQEKQSSGVYNKDFEKTKNELEHLKRENRSARNLKLREPVAGFIETGLKPDVAAHVVMTILACHHIRYNFSLDVFEEVIEYKFNDRRVIELALMHSSFKSHYGTPIDHVKNMITNCGYRRKYGAEDKREKKRVAGIMSLFNIMKGTSGGEPILHNERLEYLGDAVVELIVSHHLYFMLTHHFEGGLATYRTALVQNRNLATLAKNCRIDEMLQYSHGADLINVAEFKHALANAFEAVMAAIYLDGGLAPCDVIFSKAMYGHQPVLKEKWDHINEHELKREDPQGDRDLSFITPTLSTFHALEERLGIQFNNIRLLAKAFTRRNIPNNDLTKGHNQRLEWLGDSVLQLIVSDFLYRRFPYHHEGHMSLLRTSLVSNQTQAVVCDDLGFTEFVIKAPYKTPELKLKDKADLVEAFIGALYVDRGIEHCRAFIRIVFCPRLKHFIESEKWNDAKSHLQQWCLAMRDPSSSEPDMPEYRVLGIEGPTNNRIFKIAVYYKGKRLASAAESNVHKAELRVAELALANLESMSFSKMKAKNNSWFQNMRRRLEQDTSD</sequence>
<name>RNC_CAEEL</name>
<gene>
    <name type="primary">drsh-1</name>
    <name type="ORF">F26E4.10</name>
</gene>
<accession>O01326</accession>
<accession>A8WI03</accession>
<accession>O01327</accession>
<accession>Q9U9Q8</accession>
<reference key="1">
    <citation type="journal article" date="2000" name="Gene">
        <title>A novel type of RNase III family proteins in eukaryotes.</title>
        <authorList>
            <person name="Filippov V."/>
            <person name="Solovyev V."/>
            <person name="Filippova M."/>
            <person name="Gill S.S."/>
        </authorList>
    </citation>
    <scope>NUCLEOTIDE SEQUENCE [MRNA] OF 227-1086 (ISOFORM A)</scope>
</reference>
<reference key="2">
    <citation type="journal article" date="1998" name="Science">
        <title>Genome sequence of the nematode C. elegans: a platform for investigating biology.</title>
        <authorList>
            <consortium name="The C. elegans sequencing consortium"/>
        </authorList>
    </citation>
    <scope>NUCLEOTIDE SEQUENCE [LARGE SCALE GENOMIC DNA]</scope>
    <scope>ALTERNATIVE SPLICING</scope>
    <source>
        <strain>Bristol N2</strain>
    </source>
</reference>
<reference key="3">
    <citation type="journal article" date="2004" name="Nature">
        <title>Processing of primary microRNAs by the Microprocessor complex.</title>
        <authorList>
            <person name="Denli A.M."/>
            <person name="Tops B.B.J."/>
            <person name="Plasterk R.H.A."/>
            <person name="Ketting R.F."/>
            <person name="Hannon G.J."/>
        </authorList>
    </citation>
    <scope>FUNCTION</scope>
    <scope>DISRUPTION PHENOTYPE</scope>
</reference>